<name>MBOA2_ARATH</name>
<gene>
    <name evidence="12" type="primary">LPCAT2</name>
    <name evidence="11" type="synonym">LPLAT2</name>
    <name evidence="15" type="ordered locus">At1g63050</name>
    <name evidence="16" type="ORF">F16M19.14</name>
</gene>
<sequence>MELLDMNSMAASIGVSVAVLRFLLCFVATIPISFLWRFIPSRLGKHIYSAASGAFLSYLSFGFSSNLHFLVPMTIGYASMAIYRPLSGFITFFLGFAYLIGCHVFYMSGDAWKEGGIDSTGALMVLTLKVISCSINYNDGMLKEEGLREAQKKNRLIQMPSLIEYFGYCLCCGSHFAGPVFEMKDYLEWTEEKGIWAVSEKGKRPSPYGAMIRAVFQAAICMALYLYLVPQFPLTRFTEPVYQEWGFLKRFGYQYMAGFTARWKYYFIWSISEASIIISGLGFSGWTDETQTKAKWDRAKNVDILGVELAKSAVQIPLFWNIQVSTWLRHYVYERIVKPGKKAGFFQLLATQTVSAVWHGLYPGYIIFFVQSALMIDGSKAIYRWQQAIPPKMAMLRNVLVLINFLYTVVVLNYSSVGFMVLSLHETLVAFKSVYYIGTVIPIAVLLLSYLVPVKPVRPKTRKEE</sequence>
<proteinExistence type="evidence at protein level"/>
<accession>Q9CAN8</accession>
<organism>
    <name type="scientific">Arabidopsis thaliana</name>
    <name type="common">Mouse-ear cress</name>
    <dbReference type="NCBI Taxonomy" id="3702"/>
    <lineage>
        <taxon>Eukaryota</taxon>
        <taxon>Viridiplantae</taxon>
        <taxon>Streptophyta</taxon>
        <taxon>Embryophyta</taxon>
        <taxon>Tracheophyta</taxon>
        <taxon>Spermatophyta</taxon>
        <taxon>Magnoliopsida</taxon>
        <taxon>eudicotyledons</taxon>
        <taxon>Gunneridae</taxon>
        <taxon>Pentapetalae</taxon>
        <taxon>rosids</taxon>
        <taxon>malvids</taxon>
        <taxon>Brassicales</taxon>
        <taxon>Brassicaceae</taxon>
        <taxon>Camelineae</taxon>
        <taxon>Arabidopsis</taxon>
    </lineage>
</organism>
<dbReference type="EC" id="2.3.1.-" evidence="3"/>
<dbReference type="EC" id="2.3.1.23" evidence="3"/>
<dbReference type="EC" id="2.3.1.n7" evidence="3"/>
<dbReference type="EC" id="2.3.1.n6" evidence="3"/>
<dbReference type="EMBL" id="AC010795">
    <property type="protein sequence ID" value="AAG51612.1"/>
    <property type="molecule type" value="Genomic_DNA"/>
</dbReference>
<dbReference type="EMBL" id="CP002684">
    <property type="protein sequence ID" value="AEE34045.1"/>
    <property type="molecule type" value="Genomic_DNA"/>
</dbReference>
<dbReference type="EMBL" id="AY072080">
    <property type="protein sequence ID" value="AAL59903.1"/>
    <property type="molecule type" value="mRNA"/>
</dbReference>
<dbReference type="EMBL" id="AY122979">
    <property type="protein sequence ID" value="AAM67512.1"/>
    <property type="molecule type" value="mRNA"/>
</dbReference>
<dbReference type="PIR" id="G96655">
    <property type="entry name" value="G96655"/>
</dbReference>
<dbReference type="RefSeq" id="NP_176493.1">
    <property type="nucleotide sequence ID" value="NM_104983.5"/>
</dbReference>
<dbReference type="SMR" id="Q9CAN8"/>
<dbReference type="BioGRID" id="27829">
    <property type="interactions" value="1"/>
</dbReference>
<dbReference type="FunCoup" id="Q9CAN8">
    <property type="interactions" value="3113"/>
</dbReference>
<dbReference type="IntAct" id="Q9CAN8">
    <property type="interactions" value="1"/>
</dbReference>
<dbReference type="STRING" id="3702.Q9CAN8"/>
<dbReference type="SwissLipids" id="SLP:000001898"/>
<dbReference type="PaxDb" id="3702-AT1G63050.1"/>
<dbReference type="ProteomicsDB" id="238690"/>
<dbReference type="EnsemblPlants" id="AT1G63050.1">
    <property type="protein sequence ID" value="AT1G63050.1"/>
    <property type="gene ID" value="AT1G63050"/>
</dbReference>
<dbReference type="GeneID" id="842608"/>
<dbReference type="Gramene" id="AT1G63050.1">
    <property type="protein sequence ID" value="AT1G63050.1"/>
    <property type="gene ID" value="AT1G63050"/>
</dbReference>
<dbReference type="KEGG" id="ath:AT1G63050"/>
<dbReference type="Araport" id="AT1G63050"/>
<dbReference type="TAIR" id="AT1G63050">
    <property type="gene designation" value="LPLAT2"/>
</dbReference>
<dbReference type="eggNOG" id="KOG2704">
    <property type="taxonomic scope" value="Eukaryota"/>
</dbReference>
<dbReference type="HOGENOM" id="CLU_011340_2_0_1"/>
<dbReference type="InParanoid" id="Q9CAN8"/>
<dbReference type="OMA" id="NAWVSRY"/>
<dbReference type="PhylomeDB" id="Q9CAN8"/>
<dbReference type="BioCyc" id="ARA:AT1G63050-MONOMER"/>
<dbReference type="BRENDA" id="2.3.1.23">
    <property type="organism ID" value="399"/>
</dbReference>
<dbReference type="CD-CODE" id="4299E36E">
    <property type="entry name" value="Nucleolus"/>
</dbReference>
<dbReference type="PRO" id="PR:Q9CAN8"/>
<dbReference type="Proteomes" id="UP000006548">
    <property type="component" value="Chromosome 1"/>
</dbReference>
<dbReference type="ExpressionAtlas" id="Q9CAN8">
    <property type="expression patterns" value="baseline and differential"/>
</dbReference>
<dbReference type="GO" id="GO:0005783">
    <property type="term" value="C:endoplasmic reticulum"/>
    <property type="evidence" value="ECO:0007005"/>
    <property type="project" value="TAIR"/>
</dbReference>
<dbReference type="GO" id="GO:0005789">
    <property type="term" value="C:endoplasmic reticulum membrane"/>
    <property type="evidence" value="ECO:0007669"/>
    <property type="project" value="UniProtKB-SubCell"/>
</dbReference>
<dbReference type="GO" id="GO:0005634">
    <property type="term" value="C:nucleus"/>
    <property type="evidence" value="ECO:0007005"/>
    <property type="project" value="TAIR"/>
</dbReference>
<dbReference type="GO" id="GO:0047184">
    <property type="term" value="F:1-acylglycerophosphocholine O-acyltransferase activity"/>
    <property type="evidence" value="ECO:0000315"/>
    <property type="project" value="TAIR"/>
</dbReference>
<dbReference type="GO" id="GO:0106262">
    <property type="term" value="F:1-acylglycerophosphoethanolamine O-acyltransferase activity"/>
    <property type="evidence" value="ECO:0007669"/>
    <property type="project" value="RHEA"/>
</dbReference>
<dbReference type="GO" id="GO:0106263">
    <property type="term" value="F:1-acylglycerophosphoserine O-acyltransferase activity"/>
    <property type="evidence" value="ECO:0007669"/>
    <property type="project" value="RHEA"/>
</dbReference>
<dbReference type="GO" id="GO:0016746">
    <property type="term" value="F:acyltransferase activity"/>
    <property type="evidence" value="ECO:0000314"/>
    <property type="project" value="TAIR"/>
</dbReference>
<dbReference type="GO" id="GO:0071617">
    <property type="term" value="F:lysophospholipid acyltransferase activity"/>
    <property type="evidence" value="ECO:0000316"/>
    <property type="project" value="TAIR"/>
</dbReference>
<dbReference type="GO" id="GO:0019375">
    <property type="term" value="P:galactolipid biosynthetic process"/>
    <property type="evidence" value="ECO:0000316"/>
    <property type="project" value="TAIR"/>
</dbReference>
<dbReference type="GO" id="GO:0045017">
    <property type="term" value="P:glycerolipid biosynthetic process"/>
    <property type="evidence" value="ECO:0000315"/>
    <property type="project" value="TAIR"/>
</dbReference>
<dbReference type="GO" id="GO:0008654">
    <property type="term" value="P:phospholipid biosynthetic process"/>
    <property type="evidence" value="ECO:0000316"/>
    <property type="project" value="TAIR"/>
</dbReference>
<dbReference type="GO" id="GO:0019432">
    <property type="term" value="P:triglyceride biosynthetic process"/>
    <property type="evidence" value="ECO:0000316"/>
    <property type="project" value="TAIR"/>
</dbReference>
<dbReference type="GO" id="GO:0006641">
    <property type="term" value="P:triglyceride metabolic process"/>
    <property type="evidence" value="ECO:0000315"/>
    <property type="project" value="TAIR"/>
</dbReference>
<dbReference type="InterPro" id="IPR049941">
    <property type="entry name" value="LPLAT_7/PORCN-like"/>
</dbReference>
<dbReference type="InterPro" id="IPR004299">
    <property type="entry name" value="MBOAT_fam"/>
</dbReference>
<dbReference type="PANTHER" id="PTHR13906:SF18">
    <property type="entry name" value="LYSOPHOSPHOLIPID ACYLTRANSFERASE 2"/>
    <property type="match status" value="1"/>
</dbReference>
<dbReference type="PANTHER" id="PTHR13906">
    <property type="entry name" value="PORCUPINE"/>
    <property type="match status" value="1"/>
</dbReference>
<dbReference type="Pfam" id="PF03062">
    <property type="entry name" value="MBOAT"/>
    <property type="match status" value="1"/>
</dbReference>
<keyword id="KW-0012">Acyltransferase</keyword>
<keyword id="KW-0256">Endoplasmic reticulum</keyword>
<keyword id="KW-0444">Lipid biosynthesis</keyword>
<keyword id="KW-0443">Lipid metabolism</keyword>
<keyword id="KW-0472">Membrane</keyword>
<keyword id="KW-0594">Phospholipid biosynthesis</keyword>
<keyword id="KW-1208">Phospholipid metabolism</keyword>
<keyword id="KW-1185">Reference proteome</keyword>
<keyword id="KW-0808">Transferase</keyword>
<keyword id="KW-0812">Transmembrane</keyword>
<keyword id="KW-1133">Transmembrane helix</keyword>
<feature type="chain" id="PRO_0000425533" description="Lysophospholipid acyltransferase 2">
    <location>
        <begin position="1"/>
        <end position="465"/>
    </location>
</feature>
<feature type="transmembrane region" description="Helical" evidence="2">
    <location>
        <begin position="15"/>
        <end position="35"/>
    </location>
</feature>
<feature type="transmembrane region" description="Helical" evidence="2">
    <location>
        <begin position="55"/>
        <end position="75"/>
    </location>
</feature>
<feature type="transmembrane region" description="Helical" evidence="2">
    <location>
        <begin position="86"/>
        <end position="106"/>
    </location>
</feature>
<feature type="transmembrane region" description="Helical" evidence="2">
    <location>
        <begin position="161"/>
        <end position="181"/>
    </location>
</feature>
<feature type="transmembrane region" description="Helical" evidence="2">
    <location>
        <begin position="214"/>
        <end position="234"/>
    </location>
</feature>
<feature type="transmembrane region" description="Helical" evidence="2">
    <location>
        <begin position="266"/>
        <end position="286"/>
    </location>
</feature>
<feature type="transmembrane region" description="Helical" evidence="2">
    <location>
        <begin position="356"/>
        <end position="376"/>
    </location>
</feature>
<feature type="transmembrane region" description="Helical" evidence="2">
    <location>
        <begin position="399"/>
        <end position="419"/>
    </location>
</feature>
<feature type="transmembrane region" description="Helical" evidence="2">
    <location>
        <begin position="434"/>
        <end position="454"/>
    </location>
</feature>
<feature type="active site" evidence="1">
    <location>
        <position position="359"/>
    </location>
</feature>
<comment type="function">
    <text evidence="3 5 6 7 8 10">Lysophospholipid acyltransferase with broad specificity (PubMed:18154737). Mediates the conversion of lysophosphatidylethanolamine (1-acyl-sn-glycero-3-phosphoethanolamine or LPE) into phosphatidylethanolamine (1,2-diacyl-sn-glycero-3-phosphoethanolamine or PE) (LPEAT activity) (PubMed:18154737). Catalyzes the acylation of lysophosphatidylserine (1-acyl-2-hydroxy-sn-glycero-3-phospho-L-serine or LPS) into phosphatidylserine (1,2-diacyl-sn-glycero-3-phospho-L-serine or PS) (LPSAT activity) (PubMed:18154737). Can convert lysophosphatidylcholine (1-acyl-sn-glycero-3-phosphocholine or LPC) into phosphatidylcholine (1,2-diacyl-sn-glycero-3-phosphocholine or PC) (LPCAT activity) (PubMed:18154737, PubMed:24189065, PubMed:25268378). Exhibits preference for C18-unsaturated acyl-CoA when transferring an acyl group to lysophosphatidylcholine (PubMed:24189065, PubMed:25268378). Can also utilize lysophosphatidylglycerol (LPG) as substrate in vitro (PubMed:18154737). Has neither activity towards lysophosphatidic acid (LPA) nor lysophosphatidylinositol (LPI) (PubMed:18154737). Lysophospholipid acyltransferases catalyze the reacylation step of the phospholipid remodeling pathway also known as the Lands cycle (PubMed:18154737). The primary function of the Lands cycle is to provide a route for acyl remodeling to modify fatty acid (FA) composition of phospholipids derived from the Kennedy pathway (PubMed:22932756, PubMed:23150634). Is involved in PC acyl editing and phosphocholine headgroup exchange between PC and diacylglycerols. This processes control the majority of acyl fluxes through PC to provide polyunsaturated fatty acids for triacylglycerols synthesis in seeds (PubMed:22932756, PubMed:24189065). Involved with LPCAT1 in the direct incorporation of newly synthesized fatty acids exported form the chloroplast into PC through acyl editing (PubMed:31511316).</text>
</comment>
<comment type="catalytic activity">
    <reaction evidence="3 7">
        <text>a 1-acyl-sn-glycero-3-phosphocholine + an acyl-CoA = a 1,2-diacyl-sn-glycero-3-phosphocholine + CoA</text>
        <dbReference type="Rhea" id="RHEA:12937"/>
        <dbReference type="ChEBI" id="CHEBI:57287"/>
        <dbReference type="ChEBI" id="CHEBI:57643"/>
        <dbReference type="ChEBI" id="CHEBI:58168"/>
        <dbReference type="ChEBI" id="CHEBI:58342"/>
        <dbReference type="EC" id="2.3.1.23"/>
    </reaction>
    <physiologicalReaction direction="left-to-right" evidence="3 7">
        <dbReference type="Rhea" id="RHEA:12938"/>
    </physiologicalReaction>
</comment>
<comment type="catalytic activity">
    <reaction evidence="7">
        <text>1-(9Z-octadecenoyl)-sn-glycero-3-phosphocholine + (9Z)-octadecenoyl-CoA = 1,2-di-(9Z-octadecenoyl)-sn-glycero-3-phosphocholine + CoA</text>
        <dbReference type="Rhea" id="RHEA:37387"/>
        <dbReference type="ChEBI" id="CHEBI:28610"/>
        <dbReference type="ChEBI" id="CHEBI:57287"/>
        <dbReference type="ChEBI" id="CHEBI:57387"/>
        <dbReference type="ChEBI" id="CHEBI:74669"/>
    </reaction>
    <physiologicalReaction direction="left-to-right" evidence="7">
        <dbReference type="Rhea" id="RHEA:37388"/>
    </physiologicalReaction>
</comment>
<comment type="catalytic activity">
    <reaction evidence="7">
        <text>1-(9Z-octadecenoyl)-sn-glycero-3-phosphocholine + (9Z,12Z)-octadecadienoyl-CoA = 1-(9Z)-octadecenoyl-2-(9Z,12Z)-octadecadienoyl-sn-glycero-3-phosphocholine + CoA</text>
        <dbReference type="Rhea" id="RHEA:37391"/>
        <dbReference type="ChEBI" id="CHEBI:28610"/>
        <dbReference type="ChEBI" id="CHEBI:57287"/>
        <dbReference type="ChEBI" id="CHEBI:57383"/>
        <dbReference type="ChEBI" id="CHEBI:74670"/>
    </reaction>
    <physiologicalReaction direction="left-to-right" evidence="7">
        <dbReference type="Rhea" id="RHEA:37392"/>
    </physiologicalReaction>
</comment>
<comment type="catalytic activity">
    <reaction evidence="7">
        <text>(9Z,12Z,15Z)-octadecatrienoyl-CoA + 1-(9Z-octadecenoyl)-sn-glycero-3-phosphocholine = 1-(9Z-octadecaenoyl)-2-(9Z,12Z,15Z-octadecatrienoyl)-sn-glycero-3-phosphocholine + CoA</text>
        <dbReference type="Rhea" id="RHEA:56408"/>
        <dbReference type="ChEBI" id="CHEBI:28610"/>
        <dbReference type="ChEBI" id="CHEBI:57287"/>
        <dbReference type="ChEBI" id="CHEBI:74034"/>
        <dbReference type="ChEBI" id="CHEBI:86133"/>
    </reaction>
    <physiologicalReaction direction="left-to-right" evidence="7">
        <dbReference type="Rhea" id="RHEA:56409"/>
    </physiologicalReaction>
</comment>
<comment type="catalytic activity">
    <reaction evidence="3">
        <text>a 1-acyl-sn-glycero-3-phosphoethanolamine + an acyl-CoA = a 1,2-diacyl-sn-glycero-3-phosphoethanolamine + CoA</text>
        <dbReference type="Rhea" id="RHEA:32995"/>
        <dbReference type="ChEBI" id="CHEBI:57287"/>
        <dbReference type="ChEBI" id="CHEBI:58342"/>
        <dbReference type="ChEBI" id="CHEBI:64381"/>
        <dbReference type="ChEBI" id="CHEBI:64612"/>
        <dbReference type="EC" id="2.3.1.n7"/>
    </reaction>
    <physiologicalReaction direction="left-to-right" evidence="3">
        <dbReference type="Rhea" id="RHEA:32996"/>
    </physiologicalReaction>
</comment>
<comment type="catalytic activity">
    <reaction evidence="3">
        <text>a 1-acyl-sn-glycero-3-phospho-L-serine + an acyl-CoA = a 1,2-diacyl-sn-glycero-3-phospho-L-serine + CoA</text>
        <dbReference type="Rhea" id="RHEA:33191"/>
        <dbReference type="ChEBI" id="CHEBI:57262"/>
        <dbReference type="ChEBI" id="CHEBI:57287"/>
        <dbReference type="ChEBI" id="CHEBI:58342"/>
        <dbReference type="ChEBI" id="CHEBI:64379"/>
        <dbReference type="EC" id="2.3.1.n6"/>
    </reaction>
    <physiologicalReaction direction="left-to-right" evidence="3">
        <dbReference type="Rhea" id="RHEA:33192"/>
    </physiologicalReaction>
</comment>
<comment type="subunit">
    <text evidence="9">Interacts with GPAT9 and DGAT1.</text>
</comment>
<comment type="subcellular location">
    <subcellularLocation>
        <location evidence="14">Endoplasmic reticulum membrane</location>
        <topology evidence="14">Multi-pass membrane protein</topology>
    </subcellularLocation>
</comment>
<comment type="tissue specificity">
    <text evidence="6">Expressed in rosette leaves, pollen grains, developing embryos and developing seeds.</text>
</comment>
<comment type="disruption phenotype">
    <text evidence="4 5 6">No visible phenotype under normal growth conditions, but the double mutants lpcat1 and lpcat2-2 show increased contents of very-long-chain fatty acids and decreased polyunsaturated fatty acids in seed triacylglycerols.</text>
</comment>
<comment type="similarity">
    <text evidence="13">Belongs to the membrane-bound acyltransferase family.</text>
</comment>
<reference key="1">
    <citation type="journal article" date="2000" name="Nature">
        <title>Sequence and analysis of chromosome 1 of the plant Arabidopsis thaliana.</title>
        <authorList>
            <person name="Theologis A."/>
            <person name="Ecker J.R."/>
            <person name="Palm C.J."/>
            <person name="Federspiel N.A."/>
            <person name="Kaul S."/>
            <person name="White O."/>
            <person name="Alonso J."/>
            <person name="Altafi H."/>
            <person name="Araujo R."/>
            <person name="Bowman C.L."/>
            <person name="Brooks S.Y."/>
            <person name="Buehler E."/>
            <person name="Chan A."/>
            <person name="Chao Q."/>
            <person name="Chen H."/>
            <person name="Cheuk R.F."/>
            <person name="Chin C.W."/>
            <person name="Chung M.K."/>
            <person name="Conn L."/>
            <person name="Conway A.B."/>
            <person name="Conway A.R."/>
            <person name="Creasy T.H."/>
            <person name="Dewar K."/>
            <person name="Dunn P."/>
            <person name="Etgu P."/>
            <person name="Feldblyum T.V."/>
            <person name="Feng J.-D."/>
            <person name="Fong B."/>
            <person name="Fujii C.Y."/>
            <person name="Gill J.E."/>
            <person name="Goldsmith A.D."/>
            <person name="Haas B."/>
            <person name="Hansen N.F."/>
            <person name="Hughes B."/>
            <person name="Huizar L."/>
            <person name="Hunter J.L."/>
            <person name="Jenkins J."/>
            <person name="Johnson-Hopson C."/>
            <person name="Khan S."/>
            <person name="Khaykin E."/>
            <person name="Kim C.J."/>
            <person name="Koo H.L."/>
            <person name="Kremenetskaia I."/>
            <person name="Kurtz D.B."/>
            <person name="Kwan A."/>
            <person name="Lam B."/>
            <person name="Langin-Hooper S."/>
            <person name="Lee A."/>
            <person name="Lee J.M."/>
            <person name="Lenz C.A."/>
            <person name="Li J.H."/>
            <person name="Li Y.-P."/>
            <person name="Lin X."/>
            <person name="Liu S.X."/>
            <person name="Liu Z.A."/>
            <person name="Luros J.S."/>
            <person name="Maiti R."/>
            <person name="Marziali A."/>
            <person name="Militscher J."/>
            <person name="Miranda M."/>
            <person name="Nguyen M."/>
            <person name="Nierman W.C."/>
            <person name="Osborne B.I."/>
            <person name="Pai G."/>
            <person name="Peterson J."/>
            <person name="Pham P.K."/>
            <person name="Rizzo M."/>
            <person name="Rooney T."/>
            <person name="Rowley D."/>
            <person name="Sakano H."/>
            <person name="Salzberg S.L."/>
            <person name="Schwartz J.R."/>
            <person name="Shinn P."/>
            <person name="Southwick A.M."/>
            <person name="Sun H."/>
            <person name="Tallon L.J."/>
            <person name="Tambunga G."/>
            <person name="Toriumi M.J."/>
            <person name="Town C.D."/>
            <person name="Utterback T."/>
            <person name="Van Aken S."/>
            <person name="Vaysberg M."/>
            <person name="Vysotskaia V.S."/>
            <person name="Walker M."/>
            <person name="Wu D."/>
            <person name="Yu G."/>
            <person name="Fraser C.M."/>
            <person name="Venter J.C."/>
            <person name="Davis R.W."/>
        </authorList>
    </citation>
    <scope>NUCLEOTIDE SEQUENCE [LARGE SCALE GENOMIC DNA]</scope>
    <source>
        <strain>cv. Columbia</strain>
    </source>
</reference>
<reference key="2">
    <citation type="journal article" date="2017" name="Plant J.">
        <title>Araport11: a complete reannotation of the Arabidopsis thaliana reference genome.</title>
        <authorList>
            <person name="Cheng C.Y."/>
            <person name="Krishnakumar V."/>
            <person name="Chan A.P."/>
            <person name="Thibaud-Nissen F."/>
            <person name="Schobel S."/>
            <person name="Town C.D."/>
        </authorList>
    </citation>
    <scope>GENOME REANNOTATION</scope>
    <source>
        <strain>cv. Columbia</strain>
    </source>
</reference>
<reference key="3">
    <citation type="journal article" date="2003" name="Science">
        <title>Empirical analysis of transcriptional activity in the Arabidopsis genome.</title>
        <authorList>
            <person name="Yamada K."/>
            <person name="Lim J."/>
            <person name="Dale J.M."/>
            <person name="Chen H."/>
            <person name="Shinn P."/>
            <person name="Palm C.J."/>
            <person name="Southwick A.M."/>
            <person name="Wu H.C."/>
            <person name="Kim C.J."/>
            <person name="Nguyen M."/>
            <person name="Pham P.K."/>
            <person name="Cheuk R.F."/>
            <person name="Karlin-Newmann G."/>
            <person name="Liu S.X."/>
            <person name="Lam B."/>
            <person name="Sakano H."/>
            <person name="Wu T."/>
            <person name="Yu G."/>
            <person name="Miranda M."/>
            <person name="Quach H.L."/>
            <person name="Tripp M."/>
            <person name="Chang C.H."/>
            <person name="Lee J.M."/>
            <person name="Toriumi M.J."/>
            <person name="Chan M.M."/>
            <person name="Tang C.C."/>
            <person name="Onodera C.S."/>
            <person name="Deng J.M."/>
            <person name="Akiyama K."/>
            <person name="Ansari Y."/>
            <person name="Arakawa T."/>
            <person name="Banh J."/>
            <person name="Banno F."/>
            <person name="Bowser L."/>
            <person name="Brooks S.Y."/>
            <person name="Carninci P."/>
            <person name="Chao Q."/>
            <person name="Choy N."/>
            <person name="Enju A."/>
            <person name="Goldsmith A.D."/>
            <person name="Gurjal M."/>
            <person name="Hansen N.F."/>
            <person name="Hayashizaki Y."/>
            <person name="Johnson-Hopson C."/>
            <person name="Hsuan V.W."/>
            <person name="Iida K."/>
            <person name="Karnes M."/>
            <person name="Khan S."/>
            <person name="Koesema E."/>
            <person name="Ishida J."/>
            <person name="Jiang P.X."/>
            <person name="Jones T."/>
            <person name="Kawai J."/>
            <person name="Kamiya A."/>
            <person name="Meyers C."/>
            <person name="Nakajima M."/>
            <person name="Narusaka M."/>
            <person name="Seki M."/>
            <person name="Sakurai T."/>
            <person name="Satou M."/>
            <person name="Tamse R."/>
            <person name="Vaysberg M."/>
            <person name="Wallender E.K."/>
            <person name="Wong C."/>
            <person name="Yamamura Y."/>
            <person name="Yuan S."/>
            <person name="Shinozaki K."/>
            <person name="Davis R.W."/>
            <person name="Theologis A."/>
            <person name="Ecker J.R."/>
        </authorList>
    </citation>
    <scope>NUCLEOTIDE SEQUENCE [LARGE SCALE MRNA]</scope>
    <source>
        <strain>cv. Columbia</strain>
    </source>
</reference>
<reference key="4">
    <citation type="journal article" date="2008" name="FEBS Lett.">
        <title>A family of eukaryotic lysophospholipid acyltransferases with broad specificity.</title>
        <authorList>
            <person name="Stahl U."/>
            <person name="Stalberg K."/>
            <person name="Stymne S."/>
            <person name="Ronne H."/>
        </authorList>
    </citation>
    <scope>FUNCTION</scope>
    <scope>CATALYTIC ACTIVITY</scope>
</reference>
<reference key="5">
    <citation type="journal article" date="2012" name="BMC Plant Biol.">
        <title>Triacylglycerol synthesis by PDAT1 in the absence of DGAT1 activity is dependent on re-acylation of LPC by LPCAT2.</title>
        <authorList>
            <person name="Xu J."/>
            <person name="Carlsson A.S."/>
            <person name="Francis T."/>
            <person name="Zhang M."/>
            <person name="Hoffman T."/>
            <person name="Giblin M.E."/>
            <person name="Taylor D.C."/>
        </authorList>
    </citation>
    <scope>DISRUPTION PHENOTYPE</scope>
</reference>
<reference key="6">
    <citation type="journal article" date="2012" name="Plant Cell">
        <title>Metabolic interactions between the Lands cycle and the Kennedy pathway of glycerolipid synthesis in Arabidopsis developing seeds.</title>
        <authorList>
            <person name="Wang L."/>
            <person name="Shen W."/>
            <person name="Kazachkov M."/>
            <person name="Chen G."/>
            <person name="Chen Q."/>
            <person name="Carlsson A.S."/>
            <person name="Stymne S."/>
            <person name="Weselake R.J."/>
            <person name="Zou J."/>
        </authorList>
    </citation>
    <scope>FUNCTION</scope>
    <scope>TISSUE SPECIFICITY</scope>
    <scope>DISRUPTION PHENOTYPE</scope>
</reference>
<reference key="7">
    <citation type="journal article" date="2012" name="Plant Physiol.">
        <title>Putative glycosyltransferases and other plant Golgi apparatus proteins are revealed by LOPIT proteomics.</title>
        <authorList>
            <person name="Nikolovski N."/>
            <person name="Rubtsov D."/>
            <person name="Segura M.P."/>
            <person name="Miles G.P."/>
            <person name="Stevens T.J."/>
            <person name="Dunkley T.P."/>
            <person name="Munro S."/>
            <person name="Lilley K.S."/>
            <person name="Dupree P."/>
        </authorList>
    </citation>
    <scope>IDENTIFICATION BY MASS SPECTROMETRY</scope>
    <scope>SUBCELLULAR LOCATION</scope>
</reference>
<reference key="8">
    <citation type="journal article" date="2012" name="Plant Physiol.">
        <title>Acyl editing and headgroup exchange are the major mechanisms that direct polyunsaturated fatty acid flux into triacylglycerols.</title>
        <authorList>
            <person name="Bates P.D."/>
            <person name="Fatihi A."/>
            <person name="Snapp A.R."/>
            <person name="Carlsson A.S."/>
            <person name="Browse J."/>
            <person name="Lu C."/>
        </authorList>
    </citation>
    <scope>FUNCTION</scope>
    <scope>DISRUPTION PHENOTYPE</scope>
</reference>
<reference key="9">
    <citation type="journal article" date="2013" name="J. Biol. Chem.">
        <title>Plant acyl-CoA:lysophosphatidylcholine acyltransferases (LPCATs) have different specificities in their forward and reverse reactions.</title>
        <authorList>
            <person name="Lager I."/>
            <person name="Yilmaz J.L."/>
            <person name="Zhou X.R."/>
            <person name="Jasieniecka K."/>
            <person name="Kazachkov M."/>
            <person name="Wang P."/>
            <person name="Zou J."/>
            <person name="Weselake R."/>
            <person name="Smith M.A."/>
            <person name="Bayon S."/>
            <person name="Dyer J.M."/>
            <person name="Shockey J.M."/>
            <person name="Heinz E."/>
            <person name="Green A."/>
            <person name="Banas A."/>
            <person name="Stymne S."/>
        </authorList>
    </citation>
    <scope>FUNCTION</scope>
    <scope>CATALYTIC ACTIVITY</scope>
</reference>
<reference key="10">
    <citation type="journal article" date="2014" name="Plant J.">
        <title>Deciphering the roles of Arabidopsis LPCAT and PAH in phosphatidylcholine homeostasis and pathway coordination for chloroplast lipid synthesis.</title>
        <authorList>
            <person name="Wang L."/>
            <person name="Kazachkov M."/>
            <person name="Shen W."/>
            <person name="Bai M."/>
            <person name="Wu H."/>
            <person name="Zou J."/>
        </authorList>
    </citation>
    <scope>FUNCTION</scope>
</reference>
<reference key="11">
    <citation type="journal article" date="2016" name="Plant Physiol.">
        <title>Identification of Arabidopsis GPAT9 (At5g60620) as an essential gene involved in triacylglycerol biosynthesis.</title>
        <authorList>
            <person name="Shockey J."/>
            <person name="Regmi A."/>
            <person name="Cotton K."/>
            <person name="Adhikari N."/>
            <person name="Browse J."/>
            <person name="Bates P.D."/>
        </authorList>
    </citation>
    <scope>INTERACTION WITH GPAT9 AND DGAT1</scope>
    <source>
        <strain>cv. Columbia</strain>
    </source>
</reference>
<reference key="12">
    <citation type="journal article" date="2019" name="Plant Cell">
        <title>Metabolically distinct pools of phosphatidylcholine are involved in trafficking of fatty acids out of and into the chloroplast for membrane production.</title>
        <authorList>
            <person name="Karki N."/>
            <person name="Johnson B.S."/>
            <person name="Bates P.D."/>
        </authorList>
    </citation>
    <scope>FUNCTION</scope>
</reference>
<protein>
    <recommendedName>
        <fullName evidence="11">Lysophospholipid acyltransferase 2</fullName>
        <shortName evidence="11">AtLPLAT2</shortName>
        <ecNumber evidence="3">2.3.1.-</ecNumber>
    </recommendedName>
    <alternativeName>
        <fullName evidence="13">1-acylglycerophosphocholine O-acyltransferase</fullName>
        <ecNumber evidence="3">2.3.1.23</ecNumber>
    </alternativeName>
    <alternativeName>
        <fullName evidence="13">1-acylglycerophosphoethanolamine O-acyltransferase</fullName>
        <ecNumber evidence="3">2.3.1.n7</ecNumber>
    </alternativeName>
    <alternativeName>
        <fullName evidence="13">1-acylglycerophosphoserine O-acyltransferase</fullName>
        <ecNumber evidence="3">2.3.1.n6</ecNumber>
    </alternativeName>
    <alternativeName>
        <fullName evidence="12">Lysophosphatidylcholine acyltransferase 2</fullName>
        <shortName evidence="12">LPCAT2</shortName>
    </alternativeName>
    <alternativeName>
        <fullName evidence="11">Lysophosphatidylethanolamine acyltransferase</fullName>
        <shortName evidence="11">LPEAT</shortName>
    </alternativeName>
    <alternativeName>
        <fullName evidence="11">Lysophosphatidylglycerol acyltransferase</fullName>
        <shortName evidence="11">LPGAT</shortName>
    </alternativeName>
    <alternativeName>
        <fullName evidence="11">Lysophosphatidylserine acyltransferase</fullName>
        <shortName evidence="11">LPSAT</shortName>
    </alternativeName>
</protein>
<evidence type="ECO:0000250" key="1"/>
<evidence type="ECO:0000255" key="2"/>
<evidence type="ECO:0000269" key="3">
    <source>
    </source>
</evidence>
<evidence type="ECO:0000269" key="4">
    <source>
    </source>
</evidence>
<evidence type="ECO:0000269" key="5">
    <source>
    </source>
</evidence>
<evidence type="ECO:0000269" key="6">
    <source>
    </source>
</evidence>
<evidence type="ECO:0000269" key="7">
    <source>
    </source>
</evidence>
<evidence type="ECO:0000269" key="8">
    <source>
    </source>
</evidence>
<evidence type="ECO:0000269" key="9">
    <source>
    </source>
</evidence>
<evidence type="ECO:0000269" key="10">
    <source>
    </source>
</evidence>
<evidence type="ECO:0000303" key="11">
    <source>
    </source>
</evidence>
<evidence type="ECO:0000303" key="12">
    <source>
    </source>
</evidence>
<evidence type="ECO:0000305" key="13"/>
<evidence type="ECO:0000305" key="14">
    <source>
    </source>
</evidence>
<evidence type="ECO:0000312" key="15">
    <source>
        <dbReference type="Araport" id="AT1G63050"/>
    </source>
</evidence>
<evidence type="ECO:0000312" key="16">
    <source>
        <dbReference type="EMBL" id="AAG51612.1"/>
    </source>
</evidence>